<keyword id="KW-0687">Ribonucleoprotein</keyword>
<keyword id="KW-0689">Ribosomal protein</keyword>
<keyword id="KW-0694">RNA-binding</keyword>
<keyword id="KW-0699">rRNA-binding</keyword>
<organism>
    <name type="scientific">Bartonella tribocorum (strain CIP 105476 / IBS 506)</name>
    <dbReference type="NCBI Taxonomy" id="382640"/>
    <lineage>
        <taxon>Bacteria</taxon>
        <taxon>Pseudomonadati</taxon>
        <taxon>Pseudomonadota</taxon>
        <taxon>Alphaproteobacteria</taxon>
        <taxon>Hyphomicrobiales</taxon>
        <taxon>Bartonellaceae</taxon>
        <taxon>Bartonella</taxon>
    </lineage>
</organism>
<name>RL21_BART1</name>
<dbReference type="EMBL" id="AM260525">
    <property type="protein sequence ID" value="CAK00638.1"/>
    <property type="molecule type" value="Genomic_DNA"/>
</dbReference>
<dbReference type="RefSeq" id="WP_012230487.1">
    <property type="nucleotide sequence ID" value="NC_010161.1"/>
</dbReference>
<dbReference type="SMR" id="A9IM54"/>
<dbReference type="KEGG" id="btr:BT_0151"/>
<dbReference type="eggNOG" id="COG0261">
    <property type="taxonomic scope" value="Bacteria"/>
</dbReference>
<dbReference type="HOGENOM" id="CLU_061463_1_1_5"/>
<dbReference type="Proteomes" id="UP000001592">
    <property type="component" value="Chromosome"/>
</dbReference>
<dbReference type="GO" id="GO:0005737">
    <property type="term" value="C:cytoplasm"/>
    <property type="evidence" value="ECO:0007669"/>
    <property type="project" value="UniProtKB-ARBA"/>
</dbReference>
<dbReference type="GO" id="GO:1990904">
    <property type="term" value="C:ribonucleoprotein complex"/>
    <property type="evidence" value="ECO:0007669"/>
    <property type="project" value="UniProtKB-KW"/>
</dbReference>
<dbReference type="GO" id="GO:0005840">
    <property type="term" value="C:ribosome"/>
    <property type="evidence" value="ECO:0007669"/>
    <property type="project" value="UniProtKB-KW"/>
</dbReference>
<dbReference type="GO" id="GO:0019843">
    <property type="term" value="F:rRNA binding"/>
    <property type="evidence" value="ECO:0007669"/>
    <property type="project" value="UniProtKB-UniRule"/>
</dbReference>
<dbReference type="GO" id="GO:0003735">
    <property type="term" value="F:structural constituent of ribosome"/>
    <property type="evidence" value="ECO:0007669"/>
    <property type="project" value="InterPro"/>
</dbReference>
<dbReference type="GO" id="GO:0006412">
    <property type="term" value="P:translation"/>
    <property type="evidence" value="ECO:0007669"/>
    <property type="project" value="UniProtKB-UniRule"/>
</dbReference>
<dbReference type="HAMAP" id="MF_01363">
    <property type="entry name" value="Ribosomal_bL21"/>
    <property type="match status" value="1"/>
</dbReference>
<dbReference type="InterPro" id="IPR028909">
    <property type="entry name" value="bL21-like"/>
</dbReference>
<dbReference type="InterPro" id="IPR036164">
    <property type="entry name" value="bL21-like_sf"/>
</dbReference>
<dbReference type="InterPro" id="IPR001787">
    <property type="entry name" value="Ribosomal_bL21"/>
</dbReference>
<dbReference type="NCBIfam" id="TIGR00061">
    <property type="entry name" value="L21"/>
    <property type="match status" value="1"/>
</dbReference>
<dbReference type="PANTHER" id="PTHR21349">
    <property type="entry name" value="50S RIBOSOMAL PROTEIN L21"/>
    <property type="match status" value="1"/>
</dbReference>
<dbReference type="PANTHER" id="PTHR21349:SF0">
    <property type="entry name" value="LARGE RIBOSOMAL SUBUNIT PROTEIN BL21M"/>
    <property type="match status" value="1"/>
</dbReference>
<dbReference type="Pfam" id="PF00829">
    <property type="entry name" value="Ribosomal_L21p"/>
    <property type="match status" value="1"/>
</dbReference>
<dbReference type="SUPFAM" id="SSF141091">
    <property type="entry name" value="L21p-like"/>
    <property type="match status" value="1"/>
</dbReference>
<protein>
    <recommendedName>
        <fullName evidence="1">Large ribosomal subunit protein bL21</fullName>
    </recommendedName>
    <alternativeName>
        <fullName evidence="3">50S ribosomal protein L21</fullName>
    </alternativeName>
</protein>
<comment type="function">
    <text evidence="1">This protein binds to 23S rRNA in the presence of protein L20.</text>
</comment>
<comment type="subunit">
    <text evidence="1">Part of the 50S ribosomal subunit. Contacts protein L20.</text>
</comment>
<comment type="similarity">
    <text evidence="1">Belongs to the bacterial ribosomal protein bL21 family.</text>
</comment>
<gene>
    <name evidence="1" type="primary">rplU</name>
    <name type="ordered locus">BT_0151</name>
</gene>
<evidence type="ECO:0000255" key="1">
    <source>
        <dbReference type="HAMAP-Rule" id="MF_01363"/>
    </source>
</evidence>
<evidence type="ECO:0000256" key="2">
    <source>
        <dbReference type="SAM" id="MobiDB-lite"/>
    </source>
</evidence>
<evidence type="ECO:0000305" key="3"/>
<feature type="chain" id="PRO_1000086969" description="Large ribosomal subunit protein bL21">
    <location>
        <begin position="1"/>
        <end position="158"/>
    </location>
</feature>
<feature type="region of interest" description="Disordered" evidence="2">
    <location>
        <begin position="106"/>
        <end position="158"/>
    </location>
</feature>
<feature type="compositionally biased region" description="Basic and acidic residues" evidence="2">
    <location>
        <begin position="115"/>
        <end position="143"/>
    </location>
</feature>
<feature type="compositionally biased region" description="Low complexity" evidence="2">
    <location>
        <begin position="146"/>
        <end position="158"/>
    </location>
</feature>
<proteinExistence type="inferred from homology"/>
<reference key="1">
    <citation type="journal article" date="2007" name="Nat. Genet.">
        <title>Genomic analysis of Bartonella identifies type IV secretion systems as host adaptability factors.</title>
        <authorList>
            <person name="Saenz H.L."/>
            <person name="Engel P."/>
            <person name="Stoeckli M.C."/>
            <person name="Lanz C."/>
            <person name="Raddatz G."/>
            <person name="Vayssier-Taussat M."/>
            <person name="Birtles R."/>
            <person name="Schuster S.C."/>
            <person name="Dehio C."/>
        </authorList>
    </citation>
    <scope>NUCLEOTIDE SEQUENCE [LARGE SCALE GENOMIC DNA]</scope>
    <source>
        <strain>CIP 105476 / IBS 506</strain>
    </source>
</reference>
<accession>A9IM54</accession>
<sequence>MFAVIKTGGKQYRIVANQVVKVEKVIGNAGDVVEFNDVLMVGQEGSAVIGTPVVADARVTAEILEQARGRKVIAFKKRRRQNSKRTRGHRQEFTTLRVLEILMGGSKPKKAAAKPIKEEATAAKGTKDTAVEKKAEKTAEKKTASQKKAAVASKSKKD</sequence>